<comment type="function">
    <text evidence="1">Produces ATP from ADP in the presence of a proton gradient across the membrane. The alpha chain is a regulatory subunit.</text>
</comment>
<comment type="catalytic activity">
    <reaction evidence="1">
        <text>ATP + H2O + 4 H(+)(in) = ADP + phosphate + 5 H(+)(out)</text>
        <dbReference type="Rhea" id="RHEA:57720"/>
        <dbReference type="ChEBI" id="CHEBI:15377"/>
        <dbReference type="ChEBI" id="CHEBI:15378"/>
        <dbReference type="ChEBI" id="CHEBI:30616"/>
        <dbReference type="ChEBI" id="CHEBI:43474"/>
        <dbReference type="ChEBI" id="CHEBI:456216"/>
        <dbReference type="EC" id="7.1.2.2"/>
    </reaction>
</comment>
<comment type="subunit">
    <text evidence="1">F-type ATPases have 2 components, CF(1) - the catalytic core - and CF(0) - the membrane proton channel. CF(1) has five subunits: alpha(3), beta(3), gamma(1), delta(1), epsilon(1). CF(0) has three main subunits: a(1), b(2) and c(9-12). The alpha and beta chains form an alternating ring which encloses part of the gamma chain. CF(1) is attached to CF(0) by a central stalk formed by the gamma and epsilon chains, while a peripheral stalk is formed by the delta and b chains.</text>
</comment>
<comment type="subcellular location">
    <subcellularLocation>
        <location evidence="1">Cell membrane</location>
        <topology evidence="1">Peripheral membrane protein</topology>
    </subcellularLocation>
</comment>
<comment type="similarity">
    <text evidence="1">Belongs to the ATPase alpha/beta chains family.</text>
</comment>
<name>ATPA_BACMK</name>
<evidence type="ECO:0000255" key="1">
    <source>
        <dbReference type="HAMAP-Rule" id="MF_01346"/>
    </source>
</evidence>
<evidence type="ECO:0000256" key="2">
    <source>
        <dbReference type="SAM" id="MobiDB-lite"/>
    </source>
</evidence>
<protein>
    <recommendedName>
        <fullName evidence="1">ATP synthase subunit alpha</fullName>
        <ecNumber evidence="1">7.1.2.2</ecNumber>
    </recommendedName>
    <alternativeName>
        <fullName evidence="1">ATP synthase F1 sector subunit alpha</fullName>
    </alternativeName>
    <alternativeName>
        <fullName evidence="1">F-ATPase subunit alpha</fullName>
    </alternativeName>
</protein>
<gene>
    <name evidence="1" type="primary">atpA</name>
    <name type="ordered locus">BcerKBAB4_5105</name>
</gene>
<keyword id="KW-0066">ATP synthesis</keyword>
<keyword id="KW-0067">ATP-binding</keyword>
<keyword id="KW-1003">Cell membrane</keyword>
<keyword id="KW-0139">CF(1)</keyword>
<keyword id="KW-0375">Hydrogen ion transport</keyword>
<keyword id="KW-0406">Ion transport</keyword>
<keyword id="KW-0472">Membrane</keyword>
<keyword id="KW-0547">Nucleotide-binding</keyword>
<keyword id="KW-1278">Translocase</keyword>
<keyword id="KW-0813">Transport</keyword>
<sequence length="502" mass="54615">MSIRAEEISALIKQQIENYQSEIEVSDVGTVIQVGDGIARAHGLDNVMAGELVEFSNGVMGLAQNLEENNVGIIILGPYTEIREGDEVRRTGRIMQVPVGKELIGRVVNPLGQPVDGLGPINTTNTRPIESPAPGVMDRKSVHEPLQTGIKAIDALVPIGRGQRELIIGDRQTGKTAVALDTIINQKDEDMICIYVAIGQKESTVRNVVETLRKHGALDYTIVVTASASQPAPLLYLAPYAGVTMGEEFMYNGKHVLVVYDDLSKQAAAYRELSLLLRRPPGREAYPGDVFYLHSRLLERAAKLSDARGGGSLTALPFIETQAGDVSAYIPTNVISITDGQIFLQSDLFFSGVRPAIDAGTSVSRVGGSAQIKAMSKVSGTLRLDLASYRELEAFAQFGSDLDKATQAKLNRGARTVEVLKQGLHKPLRVEKQVIILYALTRGFLDDIPVVDITRFEEEFHAWLDSNATDLLSEIRTTKKLADDDKFAAAINGFKKVFVASE</sequence>
<reference key="1">
    <citation type="journal article" date="2008" name="Chem. Biol. Interact.">
        <title>Extending the Bacillus cereus group genomics to putative food-borne pathogens of different toxicity.</title>
        <authorList>
            <person name="Lapidus A."/>
            <person name="Goltsman E."/>
            <person name="Auger S."/>
            <person name="Galleron N."/>
            <person name="Segurens B."/>
            <person name="Dossat C."/>
            <person name="Land M.L."/>
            <person name="Broussolle V."/>
            <person name="Brillard J."/>
            <person name="Guinebretiere M.-H."/>
            <person name="Sanchis V."/>
            <person name="Nguen-the C."/>
            <person name="Lereclus D."/>
            <person name="Richardson P."/>
            <person name="Wincker P."/>
            <person name="Weissenbach J."/>
            <person name="Ehrlich S.D."/>
            <person name="Sorokin A."/>
        </authorList>
    </citation>
    <scope>NUCLEOTIDE SEQUENCE [LARGE SCALE GENOMIC DNA]</scope>
    <source>
        <strain>KBAB4</strain>
    </source>
</reference>
<accession>A9VSA5</accession>
<proteinExistence type="inferred from homology"/>
<dbReference type="EC" id="7.1.2.2" evidence="1"/>
<dbReference type="EMBL" id="CP000903">
    <property type="protein sequence ID" value="ABY46251.1"/>
    <property type="molecule type" value="Genomic_DNA"/>
</dbReference>
<dbReference type="RefSeq" id="WP_002016284.1">
    <property type="nucleotide sequence ID" value="NC_010184.1"/>
</dbReference>
<dbReference type="SMR" id="A9VSA5"/>
<dbReference type="GeneID" id="66265137"/>
<dbReference type="KEGG" id="bwe:BcerKBAB4_5105"/>
<dbReference type="eggNOG" id="COG0056">
    <property type="taxonomic scope" value="Bacteria"/>
</dbReference>
<dbReference type="HOGENOM" id="CLU_010091_2_1_9"/>
<dbReference type="Proteomes" id="UP000002154">
    <property type="component" value="Chromosome"/>
</dbReference>
<dbReference type="GO" id="GO:0005886">
    <property type="term" value="C:plasma membrane"/>
    <property type="evidence" value="ECO:0007669"/>
    <property type="project" value="UniProtKB-SubCell"/>
</dbReference>
<dbReference type="GO" id="GO:0045259">
    <property type="term" value="C:proton-transporting ATP synthase complex"/>
    <property type="evidence" value="ECO:0007669"/>
    <property type="project" value="UniProtKB-KW"/>
</dbReference>
<dbReference type="GO" id="GO:0043531">
    <property type="term" value="F:ADP binding"/>
    <property type="evidence" value="ECO:0007669"/>
    <property type="project" value="TreeGrafter"/>
</dbReference>
<dbReference type="GO" id="GO:0005524">
    <property type="term" value="F:ATP binding"/>
    <property type="evidence" value="ECO:0007669"/>
    <property type="project" value="UniProtKB-UniRule"/>
</dbReference>
<dbReference type="GO" id="GO:0046933">
    <property type="term" value="F:proton-transporting ATP synthase activity, rotational mechanism"/>
    <property type="evidence" value="ECO:0007669"/>
    <property type="project" value="UniProtKB-UniRule"/>
</dbReference>
<dbReference type="CDD" id="cd18113">
    <property type="entry name" value="ATP-synt_F1_alpha_C"/>
    <property type="match status" value="1"/>
</dbReference>
<dbReference type="CDD" id="cd18116">
    <property type="entry name" value="ATP-synt_F1_alpha_N"/>
    <property type="match status" value="1"/>
</dbReference>
<dbReference type="CDD" id="cd01132">
    <property type="entry name" value="F1-ATPase_alpha_CD"/>
    <property type="match status" value="1"/>
</dbReference>
<dbReference type="FunFam" id="1.20.150.20:FF:000001">
    <property type="entry name" value="ATP synthase subunit alpha"/>
    <property type="match status" value="1"/>
</dbReference>
<dbReference type="FunFam" id="2.40.30.20:FF:000001">
    <property type="entry name" value="ATP synthase subunit alpha"/>
    <property type="match status" value="1"/>
</dbReference>
<dbReference type="FunFam" id="3.40.50.300:FF:000002">
    <property type="entry name" value="ATP synthase subunit alpha"/>
    <property type="match status" value="1"/>
</dbReference>
<dbReference type="Gene3D" id="2.40.30.20">
    <property type="match status" value="1"/>
</dbReference>
<dbReference type="Gene3D" id="1.20.150.20">
    <property type="entry name" value="ATP synthase alpha/beta chain, C-terminal domain"/>
    <property type="match status" value="1"/>
</dbReference>
<dbReference type="Gene3D" id="3.40.50.300">
    <property type="entry name" value="P-loop containing nucleotide triphosphate hydrolases"/>
    <property type="match status" value="1"/>
</dbReference>
<dbReference type="HAMAP" id="MF_01346">
    <property type="entry name" value="ATP_synth_alpha_bact"/>
    <property type="match status" value="1"/>
</dbReference>
<dbReference type="InterPro" id="IPR023366">
    <property type="entry name" value="ATP_synth_asu-like_sf"/>
</dbReference>
<dbReference type="InterPro" id="IPR000793">
    <property type="entry name" value="ATP_synth_asu_C"/>
</dbReference>
<dbReference type="InterPro" id="IPR038376">
    <property type="entry name" value="ATP_synth_asu_C_sf"/>
</dbReference>
<dbReference type="InterPro" id="IPR033732">
    <property type="entry name" value="ATP_synth_F1_a_nt-bd_dom"/>
</dbReference>
<dbReference type="InterPro" id="IPR005294">
    <property type="entry name" value="ATP_synth_F1_asu"/>
</dbReference>
<dbReference type="InterPro" id="IPR020003">
    <property type="entry name" value="ATPase_a/bsu_AS"/>
</dbReference>
<dbReference type="InterPro" id="IPR004100">
    <property type="entry name" value="ATPase_F1/V1/A1_a/bsu_N"/>
</dbReference>
<dbReference type="InterPro" id="IPR036121">
    <property type="entry name" value="ATPase_F1/V1/A1_a/bsu_N_sf"/>
</dbReference>
<dbReference type="InterPro" id="IPR000194">
    <property type="entry name" value="ATPase_F1/V1/A1_a/bsu_nucl-bd"/>
</dbReference>
<dbReference type="InterPro" id="IPR027417">
    <property type="entry name" value="P-loop_NTPase"/>
</dbReference>
<dbReference type="NCBIfam" id="TIGR00962">
    <property type="entry name" value="atpA"/>
    <property type="match status" value="1"/>
</dbReference>
<dbReference type="NCBIfam" id="NF009884">
    <property type="entry name" value="PRK13343.1"/>
    <property type="match status" value="1"/>
</dbReference>
<dbReference type="PANTHER" id="PTHR48082">
    <property type="entry name" value="ATP SYNTHASE SUBUNIT ALPHA, MITOCHONDRIAL"/>
    <property type="match status" value="1"/>
</dbReference>
<dbReference type="PANTHER" id="PTHR48082:SF2">
    <property type="entry name" value="ATP SYNTHASE SUBUNIT ALPHA, MITOCHONDRIAL"/>
    <property type="match status" value="1"/>
</dbReference>
<dbReference type="Pfam" id="PF00006">
    <property type="entry name" value="ATP-synt_ab"/>
    <property type="match status" value="1"/>
</dbReference>
<dbReference type="Pfam" id="PF00306">
    <property type="entry name" value="ATP-synt_ab_C"/>
    <property type="match status" value="1"/>
</dbReference>
<dbReference type="Pfam" id="PF02874">
    <property type="entry name" value="ATP-synt_ab_N"/>
    <property type="match status" value="1"/>
</dbReference>
<dbReference type="PIRSF" id="PIRSF039088">
    <property type="entry name" value="F_ATPase_subunit_alpha"/>
    <property type="match status" value="1"/>
</dbReference>
<dbReference type="SUPFAM" id="SSF47917">
    <property type="entry name" value="C-terminal domain of alpha and beta subunits of F1 ATP synthase"/>
    <property type="match status" value="1"/>
</dbReference>
<dbReference type="SUPFAM" id="SSF50615">
    <property type="entry name" value="N-terminal domain of alpha and beta subunits of F1 ATP synthase"/>
    <property type="match status" value="1"/>
</dbReference>
<dbReference type="SUPFAM" id="SSF52540">
    <property type="entry name" value="P-loop containing nucleoside triphosphate hydrolases"/>
    <property type="match status" value="1"/>
</dbReference>
<dbReference type="PROSITE" id="PS00152">
    <property type="entry name" value="ATPASE_ALPHA_BETA"/>
    <property type="match status" value="1"/>
</dbReference>
<feature type="chain" id="PRO_1000143345" description="ATP synthase subunit alpha">
    <location>
        <begin position="1"/>
        <end position="502"/>
    </location>
</feature>
<feature type="region of interest" description="Disordered" evidence="2">
    <location>
        <begin position="115"/>
        <end position="135"/>
    </location>
</feature>
<feature type="binding site" evidence="1">
    <location>
        <begin position="169"/>
        <end position="176"/>
    </location>
    <ligand>
        <name>ATP</name>
        <dbReference type="ChEBI" id="CHEBI:30616"/>
    </ligand>
</feature>
<feature type="site" description="Required for activity" evidence="1">
    <location>
        <position position="362"/>
    </location>
</feature>
<organism>
    <name type="scientific">Bacillus mycoides (strain KBAB4)</name>
    <name type="common">Bacillus weihenstephanensis</name>
    <dbReference type="NCBI Taxonomy" id="315730"/>
    <lineage>
        <taxon>Bacteria</taxon>
        <taxon>Bacillati</taxon>
        <taxon>Bacillota</taxon>
        <taxon>Bacilli</taxon>
        <taxon>Bacillales</taxon>
        <taxon>Bacillaceae</taxon>
        <taxon>Bacillus</taxon>
        <taxon>Bacillus cereus group</taxon>
    </lineage>
</organism>